<reference key="1">
    <citation type="journal article" date="2008" name="PLoS ONE">
        <title>Genome sequence of the saprophyte Leptospira biflexa provides insights into the evolution of Leptospira and the pathogenesis of leptospirosis.</title>
        <authorList>
            <person name="Picardeau M."/>
            <person name="Bulach D.M."/>
            <person name="Bouchier C."/>
            <person name="Zuerner R.L."/>
            <person name="Zidane N."/>
            <person name="Wilson P.J."/>
            <person name="Creno S."/>
            <person name="Kuczek E.S."/>
            <person name="Bommezzadri S."/>
            <person name="Davis J.C."/>
            <person name="McGrath A."/>
            <person name="Johnson M.J."/>
            <person name="Boursaux-Eude C."/>
            <person name="Seemann T."/>
            <person name="Rouy Z."/>
            <person name="Coppel R.L."/>
            <person name="Rood J.I."/>
            <person name="Lajus A."/>
            <person name="Davies J.K."/>
            <person name="Medigue C."/>
            <person name="Adler B."/>
        </authorList>
    </citation>
    <scope>NUCLEOTIDE SEQUENCE [LARGE SCALE GENOMIC DNA]</scope>
    <source>
        <strain>Patoc 1 / Ames</strain>
    </source>
</reference>
<organism>
    <name type="scientific">Leptospira biflexa serovar Patoc (strain Patoc 1 / Ames)</name>
    <dbReference type="NCBI Taxonomy" id="355278"/>
    <lineage>
        <taxon>Bacteria</taxon>
        <taxon>Pseudomonadati</taxon>
        <taxon>Spirochaetota</taxon>
        <taxon>Spirochaetia</taxon>
        <taxon>Leptospirales</taxon>
        <taxon>Leptospiraceae</taxon>
        <taxon>Leptospira</taxon>
    </lineage>
</organism>
<gene>
    <name evidence="1" type="primary">rplE</name>
    <name type="ordered locus">LBF_1901</name>
</gene>
<protein>
    <recommendedName>
        <fullName evidence="1">Large ribosomal subunit protein uL5</fullName>
    </recommendedName>
    <alternativeName>
        <fullName evidence="2">50S ribosomal protein L5</fullName>
    </alternativeName>
</protein>
<feature type="chain" id="PRO_1000142418" description="Large ribosomal subunit protein uL5">
    <location>
        <begin position="1"/>
        <end position="183"/>
    </location>
</feature>
<comment type="function">
    <text evidence="1">This is one of the proteins that bind and probably mediate the attachment of the 5S RNA into the large ribosomal subunit, where it forms part of the central protuberance. In the 70S ribosome it contacts protein S13 of the 30S subunit (bridge B1b), connecting the 2 subunits; this bridge is implicated in subunit movement. Contacts the P site tRNA; the 5S rRNA and some of its associated proteins might help stabilize positioning of ribosome-bound tRNAs.</text>
</comment>
<comment type="subunit">
    <text evidence="1">Part of the 50S ribosomal subunit; part of the 5S rRNA/L5/L18/L25 subcomplex. Contacts the 5S rRNA and the P site tRNA. Forms a bridge to the 30S subunit in the 70S ribosome.</text>
</comment>
<comment type="similarity">
    <text evidence="1">Belongs to the universal ribosomal protein uL5 family.</text>
</comment>
<sequence>MVPRLKSKYEKEIRPTLQKSLGFQSVMRVPKLEKIVINVGMGEAHTNPKAMEACLVEIGQITGQRPVKTFAKKSIAGFKVREGMVLGCKVTLRGHHMYEFLDRFINVALPRVRDFRGVNPKGFDGRGNYNLSVREQIIFPEIQFDKINTIYGINITFVTNTEVDKEAFELFQAFGMPYRTAGK</sequence>
<proteinExistence type="inferred from homology"/>
<dbReference type="EMBL" id="CP000777">
    <property type="protein sequence ID" value="ABZ94405.1"/>
    <property type="molecule type" value="Genomic_DNA"/>
</dbReference>
<dbReference type="RefSeq" id="WP_012388930.1">
    <property type="nucleotide sequence ID" value="NC_010842.1"/>
</dbReference>
<dbReference type="SMR" id="B0SA35"/>
<dbReference type="KEGG" id="lbf:LBF_1901"/>
<dbReference type="HOGENOM" id="CLU_061015_2_1_12"/>
<dbReference type="GO" id="GO:1990904">
    <property type="term" value="C:ribonucleoprotein complex"/>
    <property type="evidence" value="ECO:0007669"/>
    <property type="project" value="UniProtKB-KW"/>
</dbReference>
<dbReference type="GO" id="GO:0005840">
    <property type="term" value="C:ribosome"/>
    <property type="evidence" value="ECO:0007669"/>
    <property type="project" value="UniProtKB-KW"/>
</dbReference>
<dbReference type="GO" id="GO:0019843">
    <property type="term" value="F:rRNA binding"/>
    <property type="evidence" value="ECO:0007669"/>
    <property type="project" value="UniProtKB-UniRule"/>
</dbReference>
<dbReference type="GO" id="GO:0003735">
    <property type="term" value="F:structural constituent of ribosome"/>
    <property type="evidence" value="ECO:0007669"/>
    <property type="project" value="InterPro"/>
</dbReference>
<dbReference type="GO" id="GO:0000049">
    <property type="term" value="F:tRNA binding"/>
    <property type="evidence" value="ECO:0007669"/>
    <property type="project" value="UniProtKB-UniRule"/>
</dbReference>
<dbReference type="GO" id="GO:0006412">
    <property type="term" value="P:translation"/>
    <property type="evidence" value="ECO:0007669"/>
    <property type="project" value="UniProtKB-UniRule"/>
</dbReference>
<dbReference type="FunFam" id="3.30.1440.10:FF:000001">
    <property type="entry name" value="50S ribosomal protein L5"/>
    <property type="match status" value="1"/>
</dbReference>
<dbReference type="Gene3D" id="3.30.1440.10">
    <property type="match status" value="1"/>
</dbReference>
<dbReference type="HAMAP" id="MF_01333_B">
    <property type="entry name" value="Ribosomal_uL5_B"/>
    <property type="match status" value="1"/>
</dbReference>
<dbReference type="InterPro" id="IPR002132">
    <property type="entry name" value="Ribosomal_uL5"/>
</dbReference>
<dbReference type="InterPro" id="IPR020930">
    <property type="entry name" value="Ribosomal_uL5_bac-type"/>
</dbReference>
<dbReference type="InterPro" id="IPR031309">
    <property type="entry name" value="Ribosomal_uL5_C"/>
</dbReference>
<dbReference type="InterPro" id="IPR020929">
    <property type="entry name" value="Ribosomal_uL5_CS"/>
</dbReference>
<dbReference type="InterPro" id="IPR022803">
    <property type="entry name" value="Ribosomal_uL5_dom_sf"/>
</dbReference>
<dbReference type="InterPro" id="IPR031310">
    <property type="entry name" value="Ribosomal_uL5_N"/>
</dbReference>
<dbReference type="NCBIfam" id="NF000585">
    <property type="entry name" value="PRK00010.1"/>
    <property type="match status" value="1"/>
</dbReference>
<dbReference type="PANTHER" id="PTHR11994">
    <property type="entry name" value="60S RIBOSOMAL PROTEIN L11-RELATED"/>
    <property type="match status" value="1"/>
</dbReference>
<dbReference type="Pfam" id="PF00281">
    <property type="entry name" value="Ribosomal_L5"/>
    <property type="match status" value="1"/>
</dbReference>
<dbReference type="Pfam" id="PF00673">
    <property type="entry name" value="Ribosomal_L5_C"/>
    <property type="match status" value="1"/>
</dbReference>
<dbReference type="PIRSF" id="PIRSF002161">
    <property type="entry name" value="Ribosomal_L5"/>
    <property type="match status" value="1"/>
</dbReference>
<dbReference type="SUPFAM" id="SSF55282">
    <property type="entry name" value="RL5-like"/>
    <property type="match status" value="1"/>
</dbReference>
<dbReference type="PROSITE" id="PS00358">
    <property type="entry name" value="RIBOSOMAL_L5"/>
    <property type="match status" value="1"/>
</dbReference>
<evidence type="ECO:0000255" key="1">
    <source>
        <dbReference type="HAMAP-Rule" id="MF_01333"/>
    </source>
</evidence>
<evidence type="ECO:0000305" key="2"/>
<keyword id="KW-0687">Ribonucleoprotein</keyword>
<keyword id="KW-0689">Ribosomal protein</keyword>
<keyword id="KW-0694">RNA-binding</keyword>
<keyword id="KW-0699">rRNA-binding</keyword>
<keyword id="KW-0820">tRNA-binding</keyword>
<accession>B0SA35</accession>
<name>RL5_LEPBA</name>